<gene>
    <name evidence="5" type="ORF">GL50803_008146</name>
    <name evidence="4" type="ORF">GL50803_8146</name>
</gene>
<evidence type="ECO:0000269" key="1">
    <source>
    </source>
</evidence>
<evidence type="ECO:0000303" key="2">
    <source>
    </source>
</evidence>
<evidence type="ECO:0000305" key="3"/>
<evidence type="ECO:0000312" key="4">
    <source>
        <dbReference type="EMBL" id="EDO81642.1"/>
    </source>
</evidence>
<evidence type="ECO:0000312" key="5">
    <source>
        <dbReference type="EMBL" id="KAE8305095.1"/>
    </source>
</evidence>
<evidence type="ECO:0000312" key="6">
    <source>
        <dbReference type="Proteomes" id="UP000001548"/>
    </source>
</evidence>
<accession>A8B5V9</accession>
<keyword id="KW-0966">Cell projection</keyword>
<keyword id="KW-0969">Cilium</keyword>
<keyword id="KW-0963">Cytoplasm</keyword>
<keyword id="KW-0206">Cytoskeleton</keyword>
<keyword id="KW-0282">Flagellum</keyword>
<keyword id="KW-1185">Reference proteome</keyword>
<comment type="subcellular location">
    <subcellularLocation>
        <location evidence="1">Cytoplasm</location>
        <location evidence="1">Cytoskeleton</location>
        <location evidence="1">Flagellum axoneme</location>
    </subcellularLocation>
    <text evidence="1">Localizes primarily to the cytoplasmic axonemes.</text>
</comment>
<comment type="similarity">
    <text evidence="3">Belongs to the BBS5 family.</text>
</comment>
<reference evidence="4 6" key="1">
    <citation type="journal article" date="2007" name="Science">
        <title>Genomic minimalism in the early diverging intestinal parasite Giardia lamblia.</title>
        <authorList>
            <person name="Morrison H.G."/>
            <person name="McArthur A.G."/>
            <person name="Gillin F.D."/>
            <person name="Aley S.B."/>
            <person name="Adam R.D."/>
            <person name="Olsen G.J."/>
            <person name="Best A.A."/>
            <person name="Cande W.Z."/>
            <person name="Chen F."/>
            <person name="Cipriano M.J."/>
            <person name="Davids B.J."/>
            <person name="Dawson S.C."/>
            <person name="Elmendorf H.G."/>
            <person name="Hehl A.B."/>
            <person name="Holder M.E."/>
            <person name="Huse S.M."/>
            <person name="Kim U.U."/>
            <person name="Lasek-Nesselquist E."/>
            <person name="Manning G."/>
            <person name="Nigam A."/>
            <person name="Nixon J.E.J."/>
            <person name="Palm D."/>
            <person name="Passamaneck N.E."/>
            <person name="Prabhu A."/>
            <person name="Reich C.I."/>
            <person name="Reiner D.S."/>
            <person name="Samuelson J."/>
            <person name="Svard S.G."/>
            <person name="Sogin M.L."/>
        </authorList>
    </citation>
    <scope>NUCLEOTIDE SEQUENCE [LARGE SCALE GENOMIC DNA]</scope>
    <source>
        <strain evidence="6">ATCC 50803 / WB clone C6</strain>
    </source>
</reference>
<reference evidence="5" key="2">
    <citation type="submission" date="2019-07" db="EMBL/GenBank/DDBJ databases">
        <title>New Giardia intestinalis WB genome in near-complete chromosomes.</title>
        <authorList>
            <person name="Xu F."/>
            <person name="Jex A."/>
            <person name="Svard S.G."/>
        </authorList>
    </citation>
    <scope>NUCLEOTIDE SEQUENCE [LARGE SCALE GENOMIC DNA]</scope>
    <source>
        <strain evidence="5">ATCC 50803 / WB clone C6</strain>
    </source>
</reference>
<reference key="3">
    <citation type="journal article" date="2019" name="Elife">
        <title>Length-dependent disassembly maintains four different flagellar lengths in Giardia.</title>
        <authorList>
            <person name="McInally S.G."/>
            <person name="Kondev J."/>
            <person name="Dawson S.C."/>
        </authorList>
    </citation>
    <scope>SUBCELLULAR LOCATION</scope>
    <source>
        <strain evidence="2">ATCC 50803 / WB clone C6</strain>
    </source>
</reference>
<feature type="chain" id="PRO_0000459304" description="BBSome complex member BBS5 homolog">
    <location>
        <begin position="1"/>
        <end position="443"/>
    </location>
</feature>
<organism evidence="4">
    <name type="scientific">Giardia intestinalis (strain ATCC 50803 / WB clone C6)</name>
    <name type="common">Giardia lamblia</name>
    <dbReference type="NCBI Taxonomy" id="184922"/>
    <lineage>
        <taxon>Eukaryota</taxon>
        <taxon>Metamonada</taxon>
        <taxon>Diplomonadida</taxon>
        <taxon>Hexamitidae</taxon>
        <taxon>Giardiinae</taxon>
        <taxon>Giardia</taxon>
    </lineage>
</organism>
<proteinExistence type="inferred from homology"/>
<name>BBS5_GIAIC</name>
<dbReference type="EMBL" id="AACB02000003">
    <property type="protein sequence ID" value="EDO81642.1"/>
    <property type="molecule type" value="Genomic_DNA"/>
</dbReference>
<dbReference type="EMBL" id="AACB03000001">
    <property type="protein sequence ID" value="KAE8305095.1"/>
    <property type="molecule type" value="Genomic_DNA"/>
</dbReference>
<dbReference type="RefSeq" id="XP_001709316.1">
    <property type="nucleotide sequence ID" value="XM_001709264.1"/>
</dbReference>
<dbReference type="SMR" id="A8B5V9"/>
<dbReference type="STRING" id="184922.A8B5V9"/>
<dbReference type="EnsemblProtists" id="EDO81642">
    <property type="protein sequence ID" value="EDO81642"/>
    <property type="gene ID" value="GL50803_8146"/>
</dbReference>
<dbReference type="GeneID" id="5702239"/>
<dbReference type="KEGG" id="gla:GL50803_008146"/>
<dbReference type="VEuPathDB" id="GiardiaDB:GL50803_8146"/>
<dbReference type="HOGENOM" id="CLU_618874_0_0_1"/>
<dbReference type="InParanoid" id="A8B5V9"/>
<dbReference type="OMA" id="PANDNMK"/>
<dbReference type="Proteomes" id="UP000001548">
    <property type="component" value="Chromosome 5"/>
</dbReference>
<dbReference type="GO" id="GO:0097729">
    <property type="term" value="C:9+2 motile cilium"/>
    <property type="evidence" value="ECO:0000305"/>
    <property type="project" value="UniProtKB"/>
</dbReference>
<dbReference type="GO" id="GO:0005930">
    <property type="term" value="C:axoneme"/>
    <property type="evidence" value="ECO:0000314"/>
    <property type="project" value="UniProtKB"/>
</dbReference>
<dbReference type="GO" id="GO:0034464">
    <property type="term" value="C:BBSome"/>
    <property type="evidence" value="ECO:0000318"/>
    <property type="project" value="GO_Central"/>
</dbReference>
<dbReference type="GO" id="GO:0036064">
    <property type="term" value="C:ciliary basal body"/>
    <property type="evidence" value="ECO:0000318"/>
    <property type="project" value="GO_Central"/>
</dbReference>
<dbReference type="GO" id="GO:0032266">
    <property type="term" value="F:phosphatidylinositol-3-phosphate binding"/>
    <property type="evidence" value="ECO:0000318"/>
    <property type="project" value="GO_Central"/>
</dbReference>
<dbReference type="GO" id="GO:0060271">
    <property type="term" value="P:cilium assembly"/>
    <property type="evidence" value="ECO:0000318"/>
    <property type="project" value="GO_Central"/>
</dbReference>
<dbReference type="GO" id="GO:0046907">
    <property type="term" value="P:intracellular transport"/>
    <property type="evidence" value="ECO:0000318"/>
    <property type="project" value="GO_Central"/>
</dbReference>
<dbReference type="InterPro" id="IPR006606">
    <property type="entry name" value="BBL5"/>
</dbReference>
<dbReference type="InterPro" id="IPR014003">
    <property type="entry name" value="BBS5_PH"/>
</dbReference>
<dbReference type="PANTHER" id="PTHR21351:SF0">
    <property type="entry name" value="BARDET-BIEDL SYNDROME 5 PROTEIN"/>
    <property type="match status" value="1"/>
</dbReference>
<dbReference type="PANTHER" id="PTHR21351">
    <property type="entry name" value="BARDET-BIEDL SYNDROME PROTEIN 5"/>
    <property type="match status" value="1"/>
</dbReference>
<dbReference type="Pfam" id="PF07289">
    <property type="entry name" value="BBL5"/>
    <property type="match status" value="1"/>
</dbReference>
<dbReference type="SMART" id="SM00683">
    <property type="entry name" value="DM16"/>
    <property type="match status" value="2"/>
</dbReference>
<dbReference type="SUPFAM" id="SSF50729">
    <property type="entry name" value="PH domain-like"/>
    <property type="match status" value="1"/>
</dbReference>
<sequence>MKEIFSHNRPDKLLLIDAPADALVLVPGEYAIVRFDGVEDVRADPTVLDSLRFGTVTLTNLRLAWNSRGDPNGHSISVGLSTITKISVGNLHRDRQQKVAGLEESVPPDNGLFITGNRSVVLHATFNQLGYKFELKPSSREFTQQNSNFFNILQAVYRAHDTTRMYRRVRVRSSIVRDGQPILLSREVILSSISNIGLVSAIGVSNVLGVFVRTSHRIIWFSPANESYNVSIPYVDVLSLSLKEIKGSDDKLLVFSIPANDNMKEFLSPCNELDRKTLRAKEHRGKGLSSYSIATFAFDVQKATPSVPIQSLAQSVLISIQKAQAQPDYGVEIKAQGSVDEASALVSSEQSPGGFGVQAGVEVVKTGPQTNSKDGSKVLKIIQAVASRTNFAARYIVSSSCAPGHVDGKDGGSGKLTMTLDDVLGVAFQSVPGIDSIGDLWSL</sequence>
<protein>
    <recommendedName>
        <fullName evidence="3">BBSome complex member BBS5 homolog</fullName>
    </recommendedName>
    <alternativeName>
        <fullName evidence="2">BBSome homolog BBS5</fullName>
    </alternativeName>
    <alternativeName>
        <fullName evidence="3">Bardet-Biedl syndrome 5 protein homolog</fullName>
    </alternativeName>
    <alternativeName>
        <fullName evidence="4">Basal body protein</fullName>
    </alternativeName>
    <alternativeName>
        <fullName evidence="5">Basal body protein, BBS5</fullName>
    </alternativeName>
</protein>